<feature type="chain" id="PRO_0000265984" description="Homeobox protein Hox-B9a">
    <location>
        <begin position="1"/>
        <end position="255"/>
    </location>
</feature>
<feature type="DNA-binding region" description="Homeobox" evidence="2">
    <location>
        <begin position="190"/>
        <end position="249"/>
    </location>
</feature>
<feature type="region of interest" description="Disordered" evidence="3">
    <location>
        <begin position="35"/>
        <end position="66"/>
    </location>
</feature>
<organism>
    <name type="scientific">Takifugu rubripes</name>
    <name type="common">Japanese pufferfish</name>
    <name type="synonym">Fugu rubripes</name>
    <dbReference type="NCBI Taxonomy" id="31033"/>
    <lineage>
        <taxon>Eukaryota</taxon>
        <taxon>Metazoa</taxon>
        <taxon>Chordata</taxon>
        <taxon>Craniata</taxon>
        <taxon>Vertebrata</taxon>
        <taxon>Euteleostomi</taxon>
        <taxon>Actinopterygii</taxon>
        <taxon>Neopterygii</taxon>
        <taxon>Teleostei</taxon>
        <taxon>Neoteleostei</taxon>
        <taxon>Acanthomorphata</taxon>
        <taxon>Eupercaria</taxon>
        <taxon>Tetraodontiformes</taxon>
        <taxon>Tetradontoidea</taxon>
        <taxon>Tetraodontidae</taxon>
        <taxon>Takifugu</taxon>
    </lineage>
</organism>
<evidence type="ECO:0000250" key="1"/>
<evidence type="ECO:0000255" key="2">
    <source>
        <dbReference type="PROSITE-ProRule" id="PRU00108"/>
    </source>
</evidence>
<evidence type="ECO:0000256" key="3">
    <source>
        <dbReference type="SAM" id="MobiDB-lite"/>
    </source>
</evidence>
<evidence type="ECO:0000305" key="4"/>
<accession>Q1KKY2</accession>
<gene>
    <name type="primary">hoxb9a</name>
</gene>
<name>HXB9A_TAKRU</name>
<reference key="1">
    <citation type="journal article" date="2006" name="Proc. Natl. Acad. Sci. U.S.A.">
        <title>Highly conserved syntenic blocks at the vertebrate Hox loci and conserved regulatory elements within and outside Hox gene clusters.</title>
        <authorList>
            <person name="Lee A.P."/>
            <person name="Koh E.G.L."/>
            <person name="Tay A."/>
            <person name="Brenner S."/>
            <person name="Venkatesh B."/>
        </authorList>
    </citation>
    <scope>NUCLEOTIDE SEQUENCE [GENOMIC DNA]</scope>
</reference>
<sequence>MSISGTLSNYYVDSIISHESDDLTASTRFPSVQYSGSSSAAAANGRQPGGAVHAEHPHPEPYPSCSFQPKPPVFSSSWSPFSPHHGASSLPAVYHPYLPAQHVPSADTRYLRSWLDCAPRGSESVQGHTGQVKLEPQLGHLGGEIPAKLSGQHPHDNPRTCWSRRPRLGFHLLLSPSDDPSANWLHARSSRKKRCPYTKYQTLELEKEFLFNMYLTRDRRHEVARALNLTERQVKIWFQNRRMKMKKQSKDQPKD</sequence>
<keyword id="KW-0217">Developmental protein</keyword>
<keyword id="KW-0238">DNA-binding</keyword>
<keyword id="KW-0371">Homeobox</keyword>
<keyword id="KW-0539">Nucleus</keyword>
<keyword id="KW-1185">Reference proteome</keyword>
<keyword id="KW-0804">Transcription</keyword>
<keyword id="KW-0805">Transcription regulation</keyword>
<comment type="function">
    <text evidence="1">Sequence-specific transcription factor which is part of a developmental regulatory system that provides cells with specific positional identities on the anterior-posterior axis.</text>
</comment>
<comment type="subcellular location">
    <subcellularLocation>
        <location evidence="2">Nucleus</location>
    </subcellularLocation>
</comment>
<comment type="similarity">
    <text evidence="4">Belongs to the Abd-B homeobox family.</text>
</comment>
<dbReference type="EMBL" id="DQ481665">
    <property type="protein sequence ID" value="ABF22412.1"/>
    <property type="molecule type" value="Genomic_DNA"/>
</dbReference>
<dbReference type="SMR" id="Q1KKY2"/>
<dbReference type="FunCoup" id="Q1KKY2">
    <property type="interactions" value="41"/>
</dbReference>
<dbReference type="STRING" id="31033.ENSTRUP00000054479"/>
<dbReference type="InParanoid" id="Q1KKY2"/>
<dbReference type="Proteomes" id="UP000005226">
    <property type="component" value="Unplaced"/>
</dbReference>
<dbReference type="GO" id="GO:0005634">
    <property type="term" value="C:nucleus"/>
    <property type="evidence" value="ECO:0007669"/>
    <property type="project" value="UniProtKB-SubCell"/>
</dbReference>
<dbReference type="GO" id="GO:0000981">
    <property type="term" value="F:DNA-binding transcription factor activity, RNA polymerase II-specific"/>
    <property type="evidence" value="ECO:0007669"/>
    <property type="project" value="InterPro"/>
</dbReference>
<dbReference type="GO" id="GO:0000978">
    <property type="term" value="F:RNA polymerase II cis-regulatory region sequence-specific DNA binding"/>
    <property type="evidence" value="ECO:0007669"/>
    <property type="project" value="TreeGrafter"/>
</dbReference>
<dbReference type="GO" id="GO:0009952">
    <property type="term" value="P:anterior/posterior pattern specification"/>
    <property type="evidence" value="ECO:0007669"/>
    <property type="project" value="TreeGrafter"/>
</dbReference>
<dbReference type="GO" id="GO:0006351">
    <property type="term" value="P:DNA-templated transcription"/>
    <property type="evidence" value="ECO:0007669"/>
    <property type="project" value="InterPro"/>
</dbReference>
<dbReference type="GO" id="GO:0048704">
    <property type="term" value="P:embryonic skeletal system morphogenesis"/>
    <property type="evidence" value="ECO:0007669"/>
    <property type="project" value="TreeGrafter"/>
</dbReference>
<dbReference type="GO" id="GO:0009954">
    <property type="term" value="P:proximal/distal pattern formation"/>
    <property type="evidence" value="ECO:0007669"/>
    <property type="project" value="TreeGrafter"/>
</dbReference>
<dbReference type="CDD" id="cd00086">
    <property type="entry name" value="homeodomain"/>
    <property type="match status" value="1"/>
</dbReference>
<dbReference type="FunFam" id="1.10.10.60:FF:000018">
    <property type="entry name" value="Homeobox A10"/>
    <property type="match status" value="1"/>
</dbReference>
<dbReference type="Gene3D" id="1.10.10.60">
    <property type="entry name" value="Homeodomain-like"/>
    <property type="match status" value="1"/>
</dbReference>
<dbReference type="InterPro" id="IPR050803">
    <property type="entry name" value="Abd-B_homeobox_TF"/>
</dbReference>
<dbReference type="InterPro" id="IPR001356">
    <property type="entry name" value="HD"/>
</dbReference>
<dbReference type="InterPro" id="IPR020479">
    <property type="entry name" value="HD_metazoa"/>
</dbReference>
<dbReference type="InterPro" id="IPR017970">
    <property type="entry name" value="Homeobox_CS"/>
</dbReference>
<dbReference type="InterPro" id="IPR009057">
    <property type="entry name" value="Homeodomain-like_sf"/>
</dbReference>
<dbReference type="InterPro" id="IPR006711">
    <property type="entry name" value="Hox9_activation_N"/>
</dbReference>
<dbReference type="InterPro" id="IPR017112">
    <property type="entry name" value="HXA9/HXB9/HXC9"/>
</dbReference>
<dbReference type="PANTHER" id="PTHR45970">
    <property type="entry name" value="AGAP004664-PA"/>
    <property type="match status" value="1"/>
</dbReference>
<dbReference type="PANTHER" id="PTHR45970:SF5">
    <property type="entry name" value="HOMEOBOX PROTEIN HOX-B9"/>
    <property type="match status" value="1"/>
</dbReference>
<dbReference type="Pfam" id="PF00046">
    <property type="entry name" value="Homeodomain"/>
    <property type="match status" value="1"/>
</dbReference>
<dbReference type="Pfam" id="PF04617">
    <property type="entry name" value="Hox9_act"/>
    <property type="match status" value="1"/>
</dbReference>
<dbReference type="PIRSF" id="PIRSF037109">
    <property type="entry name" value="Homeobox_Hox9"/>
    <property type="match status" value="1"/>
</dbReference>
<dbReference type="PRINTS" id="PR00024">
    <property type="entry name" value="HOMEOBOX"/>
</dbReference>
<dbReference type="SMART" id="SM00389">
    <property type="entry name" value="HOX"/>
    <property type="match status" value="1"/>
</dbReference>
<dbReference type="SUPFAM" id="SSF46689">
    <property type="entry name" value="Homeodomain-like"/>
    <property type="match status" value="1"/>
</dbReference>
<dbReference type="PROSITE" id="PS00027">
    <property type="entry name" value="HOMEOBOX_1"/>
    <property type="match status" value="1"/>
</dbReference>
<dbReference type="PROSITE" id="PS50071">
    <property type="entry name" value="HOMEOBOX_2"/>
    <property type="match status" value="1"/>
</dbReference>
<proteinExistence type="inferred from homology"/>
<protein>
    <recommendedName>
        <fullName>Homeobox protein Hox-B9a</fullName>
    </recommendedName>
</protein>